<sequence>MANKKIRIRLKAYEHRTLDTAAEKIVETATRTGATVAGPVPLPTERSLYTIIRATHKYKDSREQFEMRTHKRLVDIINPTQKTVDALMKLDLPSGVNVEIKL</sequence>
<protein>
    <recommendedName>
        <fullName evidence="1">Small ribosomal subunit protein uS10</fullName>
    </recommendedName>
    <alternativeName>
        <fullName evidence="2">30S ribosomal protein S10</fullName>
    </alternativeName>
</protein>
<comment type="function">
    <text evidence="1">Involved in the binding of tRNA to the ribosomes.</text>
</comment>
<comment type="subunit">
    <text evidence="1">Part of the 30S ribosomal subunit.</text>
</comment>
<comment type="similarity">
    <text evidence="1">Belongs to the universal ribosomal protein uS10 family.</text>
</comment>
<organism>
    <name type="scientific">Streptococcus pyogenes serotype M28 (strain MGAS6180)</name>
    <dbReference type="NCBI Taxonomy" id="319701"/>
    <lineage>
        <taxon>Bacteria</taxon>
        <taxon>Bacillati</taxon>
        <taxon>Bacillota</taxon>
        <taxon>Bacilli</taxon>
        <taxon>Lactobacillales</taxon>
        <taxon>Streptococcaceae</taxon>
        <taxon>Streptococcus</taxon>
    </lineage>
</organism>
<accession>Q48VV0</accession>
<dbReference type="EMBL" id="CP000056">
    <property type="protein sequence ID" value="AAX71156.1"/>
    <property type="molecule type" value="Genomic_DNA"/>
</dbReference>
<dbReference type="RefSeq" id="WP_001284518.1">
    <property type="nucleotide sequence ID" value="NC_007296.2"/>
</dbReference>
<dbReference type="SMR" id="Q48VV0"/>
<dbReference type="GeneID" id="69900025"/>
<dbReference type="KEGG" id="spb:M28_Spy0042"/>
<dbReference type="HOGENOM" id="CLU_122625_1_3_9"/>
<dbReference type="GO" id="GO:1990904">
    <property type="term" value="C:ribonucleoprotein complex"/>
    <property type="evidence" value="ECO:0007669"/>
    <property type="project" value="UniProtKB-KW"/>
</dbReference>
<dbReference type="GO" id="GO:0005840">
    <property type="term" value="C:ribosome"/>
    <property type="evidence" value="ECO:0007669"/>
    <property type="project" value="UniProtKB-KW"/>
</dbReference>
<dbReference type="GO" id="GO:0003735">
    <property type="term" value="F:structural constituent of ribosome"/>
    <property type="evidence" value="ECO:0007669"/>
    <property type="project" value="InterPro"/>
</dbReference>
<dbReference type="GO" id="GO:0000049">
    <property type="term" value="F:tRNA binding"/>
    <property type="evidence" value="ECO:0007669"/>
    <property type="project" value="UniProtKB-UniRule"/>
</dbReference>
<dbReference type="GO" id="GO:0006412">
    <property type="term" value="P:translation"/>
    <property type="evidence" value="ECO:0007669"/>
    <property type="project" value="UniProtKB-UniRule"/>
</dbReference>
<dbReference type="FunFam" id="3.30.70.600:FF:000001">
    <property type="entry name" value="30S ribosomal protein S10"/>
    <property type="match status" value="1"/>
</dbReference>
<dbReference type="Gene3D" id="3.30.70.600">
    <property type="entry name" value="Ribosomal protein S10 domain"/>
    <property type="match status" value="1"/>
</dbReference>
<dbReference type="HAMAP" id="MF_00508">
    <property type="entry name" value="Ribosomal_uS10"/>
    <property type="match status" value="1"/>
</dbReference>
<dbReference type="InterPro" id="IPR001848">
    <property type="entry name" value="Ribosomal_uS10"/>
</dbReference>
<dbReference type="InterPro" id="IPR018268">
    <property type="entry name" value="Ribosomal_uS10_CS"/>
</dbReference>
<dbReference type="InterPro" id="IPR027486">
    <property type="entry name" value="Ribosomal_uS10_dom"/>
</dbReference>
<dbReference type="InterPro" id="IPR036838">
    <property type="entry name" value="Ribosomal_uS10_dom_sf"/>
</dbReference>
<dbReference type="NCBIfam" id="NF001861">
    <property type="entry name" value="PRK00596.1"/>
    <property type="match status" value="1"/>
</dbReference>
<dbReference type="NCBIfam" id="TIGR01049">
    <property type="entry name" value="rpsJ_bact"/>
    <property type="match status" value="1"/>
</dbReference>
<dbReference type="PANTHER" id="PTHR11700">
    <property type="entry name" value="30S RIBOSOMAL PROTEIN S10 FAMILY MEMBER"/>
    <property type="match status" value="1"/>
</dbReference>
<dbReference type="Pfam" id="PF00338">
    <property type="entry name" value="Ribosomal_S10"/>
    <property type="match status" value="1"/>
</dbReference>
<dbReference type="PRINTS" id="PR00971">
    <property type="entry name" value="RIBOSOMALS10"/>
</dbReference>
<dbReference type="SMART" id="SM01403">
    <property type="entry name" value="Ribosomal_S10"/>
    <property type="match status" value="1"/>
</dbReference>
<dbReference type="SUPFAM" id="SSF54999">
    <property type="entry name" value="Ribosomal protein S10"/>
    <property type="match status" value="1"/>
</dbReference>
<dbReference type="PROSITE" id="PS00361">
    <property type="entry name" value="RIBOSOMAL_S10"/>
    <property type="match status" value="1"/>
</dbReference>
<name>RS10_STRPM</name>
<evidence type="ECO:0000255" key="1">
    <source>
        <dbReference type="HAMAP-Rule" id="MF_00508"/>
    </source>
</evidence>
<evidence type="ECO:0000305" key="2"/>
<reference key="1">
    <citation type="journal article" date="2005" name="J. Infect. Dis.">
        <title>Genome sequence of a serotype M28 strain of group A Streptococcus: potential new insights into puerperal sepsis and bacterial disease specificity.</title>
        <authorList>
            <person name="Green N.M."/>
            <person name="Zhang S."/>
            <person name="Porcella S.F."/>
            <person name="Nagiec M.J."/>
            <person name="Barbian K.D."/>
            <person name="Beres S.B."/>
            <person name="Lefebvre R.B."/>
            <person name="Musser J.M."/>
        </authorList>
    </citation>
    <scope>NUCLEOTIDE SEQUENCE [LARGE SCALE GENOMIC DNA]</scope>
    <source>
        <strain>MGAS6180</strain>
    </source>
</reference>
<proteinExistence type="inferred from homology"/>
<gene>
    <name evidence="1" type="primary">rpsJ</name>
    <name type="ordered locus">M28_Spy0042</name>
</gene>
<keyword id="KW-0687">Ribonucleoprotein</keyword>
<keyword id="KW-0689">Ribosomal protein</keyword>
<feature type="chain" id="PRO_0000237101" description="Small ribosomal subunit protein uS10">
    <location>
        <begin position="1"/>
        <end position="102"/>
    </location>
</feature>